<feature type="chain" id="PRO_0000114229" description="Chromosomal replication initiator protein DnaA">
    <location>
        <begin position="1"/>
        <end position="462"/>
    </location>
</feature>
<feature type="region of interest" description="Domain I, interacts with DnaA modulators" evidence="1">
    <location>
        <begin position="1"/>
        <end position="86"/>
    </location>
</feature>
<feature type="region of interest" description="Domain II" evidence="1">
    <location>
        <begin position="86"/>
        <end position="125"/>
    </location>
</feature>
<feature type="region of interest" description="Domain III, AAA+ region" evidence="1">
    <location>
        <begin position="126"/>
        <end position="342"/>
    </location>
</feature>
<feature type="region of interest" description="Domain IV, binds dsDNA" evidence="1">
    <location>
        <begin position="343"/>
        <end position="462"/>
    </location>
</feature>
<feature type="binding site" evidence="1">
    <location>
        <position position="170"/>
    </location>
    <ligand>
        <name>ATP</name>
        <dbReference type="ChEBI" id="CHEBI:30616"/>
    </ligand>
</feature>
<feature type="binding site" evidence="1">
    <location>
        <position position="172"/>
    </location>
    <ligand>
        <name>ATP</name>
        <dbReference type="ChEBI" id="CHEBI:30616"/>
    </ligand>
</feature>
<feature type="binding site" evidence="1">
    <location>
        <position position="173"/>
    </location>
    <ligand>
        <name>ATP</name>
        <dbReference type="ChEBI" id="CHEBI:30616"/>
    </ligand>
</feature>
<feature type="binding site" evidence="1">
    <location>
        <position position="174"/>
    </location>
    <ligand>
        <name>ATP</name>
        <dbReference type="ChEBI" id="CHEBI:30616"/>
    </ligand>
</feature>
<accession>Q7NAD3</accession>
<organism>
    <name type="scientific">Photorhabdus laumondii subsp. laumondii (strain DSM 15139 / CIP 105565 / TT01)</name>
    <name type="common">Photorhabdus luminescens subsp. laumondii</name>
    <dbReference type="NCBI Taxonomy" id="243265"/>
    <lineage>
        <taxon>Bacteria</taxon>
        <taxon>Pseudomonadati</taxon>
        <taxon>Pseudomonadota</taxon>
        <taxon>Gammaproteobacteria</taxon>
        <taxon>Enterobacterales</taxon>
        <taxon>Morganellaceae</taxon>
        <taxon>Photorhabdus</taxon>
    </lineage>
</organism>
<gene>
    <name evidence="1" type="primary">dnaA</name>
    <name type="ordered locus">plu0001</name>
</gene>
<dbReference type="EMBL" id="BX571859">
    <property type="protein sequence ID" value="CAE12296.1"/>
    <property type="molecule type" value="Genomic_DNA"/>
</dbReference>
<dbReference type="RefSeq" id="WP_011144414.1">
    <property type="nucleotide sequence ID" value="NC_005126.1"/>
</dbReference>
<dbReference type="SMR" id="Q7NAD3"/>
<dbReference type="STRING" id="243265.plu0001"/>
<dbReference type="GeneID" id="48846302"/>
<dbReference type="KEGG" id="plu:plu0001"/>
<dbReference type="eggNOG" id="COG0593">
    <property type="taxonomic scope" value="Bacteria"/>
</dbReference>
<dbReference type="HOGENOM" id="CLU_026910_0_1_6"/>
<dbReference type="OrthoDB" id="9807019at2"/>
<dbReference type="Proteomes" id="UP000002514">
    <property type="component" value="Chromosome"/>
</dbReference>
<dbReference type="GO" id="GO:0005737">
    <property type="term" value="C:cytoplasm"/>
    <property type="evidence" value="ECO:0007669"/>
    <property type="project" value="UniProtKB-SubCell"/>
</dbReference>
<dbReference type="GO" id="GO:0005886">
    <property type="term" value="C:plasma membrane"/>
    <property type="evidence" value="ECO:0007669"/>
    <property type="project" value="TreeGrafter"/>
</dbReference>
<dbReference type="GO" id="GO:0005524">
    <property type="term" value="F:ATP binding"/>
    <property type="evidence" value="ECO:0007669"/>
    <property type="project" value="UniProtKB-UniRule"/>
</dbReference>
<dbReference type="GO" id="GO:0016887">
    <property type="term" value="F:ATP hydrolysis activity"/>
    <property type="evidence" value="ECO:0007669"/>
    <property type="project" value="InterPro"/>
</dbReference>
<dbReference type="GO" id="GO:0003688">
    <property type="term" value="F:DNA replication origin binding"/>
    <property type="evidence" value="ECO:0007669"/>
    <property type="project" value="UniProtKB-UniRule"/>
</dbReference>
<dbReference type="GO" id="GO:0008289">
    <property type="term" value="F:lipid binding"/>
    <property type="evidence" value="ECO:0007669"/>
    <property type="project" value="UniProtKB-KW"/>
</dbReference>
<dbReference type="GO" id="GO:0006270">
    <property type="term" value="P:DNA replication initiation"/>
    <property type="evidence" value="ECO:0007669"/>
    <property type="project" value="UniProtKB-UniRule"/>
</dbReference>
<dbReference type="GO" id="GO:0006275">
    <property type="term" value="P:regulation of DNA replication"/>
    <property type="evidence" value="ECO:0007669"/>
    <property type="project" value="UniProtKB-UniRule"/>
</dbReference>
<dbReference type="CDD" id="cd00009">
    <property type="entry name" value="AAA"/>
    <property type="match status" value="1"/>
</dbReference>
<dbReference type="CDD" id="cd06571">
    <property type="entry name" value="Bac_DnaA_C"/>
    <property type="match status" value="1"/>
</dbReference>
<dbReference type="FunFam" id="1.10.1750.10:FF:000001">
    <property type="entry name" value="Chromosomal replication initiator protein DnaA"/>
    <property type="match status" value="1"/>
</dbReference>
<dbReference type="FunFam" id="1.10.8.60:FF:000003">
    <property type="entry name" value="Chromosomal replication initiator protein DnaA"/>
    <property type="match status" value="1"/>
</dbReference>
<dbReference type="FunFam" id="3.30.300.180:FF:000001">
    <property type="entry name" value="Chromosomal replication initiator protein DnaA"/>
    <property type="match status" value="1"/>
</dbReference>
<dbReference type="FunFam" id="3.40.50.300:FF:000103">
    <property type="entry name" value="Chromosomal replication initiator protein DnaA"/>
    <property type="match status" value="1"/>
</dbReference>
<dbReference type="Gene3D" id="1.10.1750.10">
    <property type="match status" value="1"/>
</dbReference>
<dbReference type="Gene3D" id="1.10.8.60">
    <property type="match status" value="1"/>
</dbReference>
<dbReference type="Gene3D" id="3.30.300.180">
    <property type="match status" value="1"/>
</dbReference>
<dbReference type="Gene3D" id="3.40.50.300">
    <property type="entry name" value="P-loop containing nucleotide triphosphate hydrolases"/>
    <property type="match status" value="1"/>
</dbReference>
<dbReference type="HAMAP" id="MF_00377">
    <property type="entry name" value="DnaA_bact"/>
    <property type="match status" value="1"/>
</dbReference>
<dbReference type="InterPro" id="IPR003593">
    <property type="entry name" value="AAA+_ATPase"/>
</dbReference>
<dbReference type="InterPro" id="IPR001957">
    <property type="entry name" value="Chromosome_initiator_DnaA"/>
</dbReference>
<dbReference type="InterPro" id="IPR020591">
    <property type="entry name" value="Chromosome_initiator_DnaA-like"/>
</dbReference>
<dbReference type="InterPro" id="IPR018312">
    <property type="entry name" value="Chromosome_initiator_DnaA_CS"/>
</dbReference>
<dbReference type="InterPro" id="IPR013159">
    <property type="entry name" value="DnaA_C"/>
</dbReference>
<dbReference type="InterPro" id="IPR013317">
    <property type="entry name" value="DnaA_dom"/>
</dbReference>
<dbReference type="InterPro" id="IPR024633">
    <property type="entry name" value="DnaA_N_dom"/>
</dbReference>
<dbReference type="InterPro" id="IPR038454">
    <property type="entry name" value="DnaA_N_sf"/>
</dbReference>
<dbReference type="InterPro" id="IPR027417">
    <property type="entry name" value="P-loop_NTPase"/>
</dbReference>
<dbReference type="InterPro" id="IPR010921">
    <property type="entry name" value="Trp_repressor/repl_initiator"/>
</dbReference>
<dbReference type="NCBIfam" id="TIGR00362">
    <property type="entry name" value="DnaA"/>
    <property type="match status" value="1"/>
</dbReference>
<dbReference type="PANTHER" id="PTHR30050">
    <property type="entry name" value="CHROMOSOMAL REPLICATION INITIATOR PROTEIN DNAA"/>
    <property type="match status" value="1"/>
</dbReference>
<dbReference type="PANTHER" id="PTHR30050:SF2">
    <property type="entry name" value="CHROMOSOMAL REPLICATION INITIATOR PROTEIN DNAA"/>
    <property type="match status" value="1"/>
</dbReference>
<dbReference type="Pfam" id="PF00308">
    <property type="entry name" value="Bac_DnaA"/>
    <property type="match status" value="1"/>
</dbReference>
<dbReference type="Pfam" id="PF08299">
    <property type="entry name" value="Bac_DnaA_C"/>
    <property type="match status" value="1"/>
</dbReference>
<dbReference type="Pfam" id="PF11638">
    <property type="entry name" value="DnaA_N"/>
    <property type="match status" value="1"/>
</dbReference>
<dbReference type="PRINTS" id="PR00051">
    <property type="entry name" value="DNAA"/>
</dbReference>
<dbReference type="SMART" id="SM00382">
    <property type="entry name" value="AAA"/>
    <property type="match status" value="1"/>
</dbReference>
<dbReference type="SMART" id="SM00760">
    <property type="entry name" value="Bac_DnaA_C"/>
    <property type="match status" value="1"/>
</dbReference>
<dbReference type="SUPFAM" id="SSF52540">
    <property type="entry name" value="P-loop containing nucleoside triphosphate hydrolases"/>
    <property type="match status" value="1"/>
</dbReference>
<dbReference type="SUPFAM" id="SSF48295">
    <property type="entry name" value="TrpR-like"/>
    <property type="match status" value="1"/>
</dbReference>
<dbReference type="PROSITE" id="PS01008">
    <property type="entry name" value="DNAA"/>
    <property type="match status" value="1"/>
</dbReference>
<comment type="function">
    <text evidence="1">Plays an essential role in the initiation and regulation of chromosomal replication. ATP-DnaA binds to the origin of replication (oriC) to initiate formation of the DNA replication initiation complex once per cell cycle. Binds the DnaA box (a 9 base pair repeat at the origin) and separates the double-stranded (ds)DNA. Forms a right-handed helical filament on oriC DNA; dsDNA binds to the exterior of the filament while single-stranded (ss)DNA is stabiized in the filament's interior. The ATP-DnaA-oriC complex binds and stabilizes one strand of the AT-rich DNA unwinding element (DUE), permitting loading of DNA polymerase. After initiation quickly degrades to an ADP-DnaA complex that is not apt for DNA replication. Binds acidic phospholipids.</text>
</comment>
<comment type="subunit">
    <text evidence="1">Oligomerizes as a right-handed, spiral filament on DNA at oriC.</text>
</comment>
<comment type="subcellular location">
    <subcellularLocation>
        <location evidence="1">Cytoplasm</location>
    </subcellularLocation>
</comment>
<comment type="domain">
    <text evidence="1">Domain I is involved in oligomerization and binding regulators, domain II is flexibile and of varying length in different bacteria, domain III forms the AAA+ region, while domain IV binds dsDNA.</text>
</comment>
<comment type="similarity">
    <text evidence="1">Belongs to the DnaA family.</text>
</comment>
<evidence type="ECO:0000255" key="1">
    <source>
        <dbReference type="HAMAP-Rule" id="MF_00377"/>
    </source>
</evidence>
<protein>
    <recommendedName>
        <fullName evidence="1">Chromosomal replication initiator protein DnaA</fullName>
    </recommendedName>
</protein>
<proteinExistence type="inferred from homology"/>
<keyword id="KW-0067">ATP-binding</keyword>
<keyword id="KW-0963">Cytoplasm</keyword>
<keyword id="KW-0235">DNA replication</keyword>
<keyword id="KW-0238">DNA-binding</keyword>
<keyword id="KW-0446">Lipid-binding</keyword>
<keyword id="KW-0547">Nucleotide-binding</keyword>
<keyword id="KW-1185">Reference proteome</keyword>
<reference key="1">
    <citation type="journal article" date="2003" name="Nat. Biotechnol.">
        <title>The genome sequence of the entomopathogenic bacterium Photorhabdus luminescens.</title>
        <authorList>
            <person name="Duchaud E."/>
            <person name="Rusniok C."/>
            <person name="Frangeul L."/>
            <person name="Buchrieser C."/>
            <person name="Givaudan A."/>
            <person name="Taourit S."/>
            <person name="Bocs S."/>
            <person name="Boursaux-Eude C."/>
            <person name="Chandler M."/>
            <person name="Charles J.-F."/>
            <person name="Dassa E."/>
            <person name="Derose R."/>
            <person name="Derzelle S."/>
            <person name="Freyssinet G."/>
            <person name="Gaudriault S."/>
            <person name="Medigue C."/>
            <person name="Lanois A."/>
            <person name="Powell K."/>
            <person name="Siguier P."/>
            <person name="Vincent R."/>
            <person name="Wingate V."/>
            <person name="Zouine M."/>
            <person name="Glaser P."/>
            <person name="Boemare N."/>
            <person name="Danchin A."/>
            <person name="Kunst F."/>
        </authorList>
    </citation>
    <scope>NUCLEOTIDE SEQUENCE [LARGE SCALE GENOMIC DNA]</scope>
    <source>
        <strain>DSM 15139 / CIP 105565 / TT01</strain>
    </source>
</reference>
<sequence>MSLSLWQQCLARLQDELPATEFSMWIRPLQAELSGNTLALYAPNRFVLDWVREKYINNINGLLNDFCGAEVPLLRFEVGNKPVSQNDSPPQRVVTHTPVAPAPQNTSVRPSWDNTAVQPELSYRSNVNPKHTFDNFVEGKSNQLARAAARQVADNPGGAYNPLFLYGGTGLGKTHLLHAVGNSIMARKANAKVVYMHSERFVQDMVKALQNNAIEEFKRYYRSVDALLIDDIQFFANKERSQEEFFHTFNALLEGNQQIILTSDRYPKEINGVEDRLKSRFGWGLTVAIEPPELETRVAILMKKADENEIQLPGEVAFFIAKRLRSNVRELEGALNRVIANANFTGRAITIDFVREALRDLLALQEKLVTIDNIQKTVAEYYKIKVADLLSKRRSRSVARPRQMAMALAKELTNHSLPEIGDAFGGRDHTTVLHACRKIEQLREESHDIKEDFSNLIRTLSS</sequence>
<name>DNAA_PHOLL</name>